<keyword id="KW-0067">ATP-binding</keyword>
<keyword id="KW-0119">Carbohydrate metabolism</keyword>
<keyword id="KW-0963">Cytoplasm</keyword>
<keyword id="KW-0299">Galactose metabolism</keyword>
<keyword id="KW-0418">Kinase</keyword>
<keyword id="KW-0460">Magnesium</keyword>
<keyword id="KW-0479">Metal-binding</keyword>
<keyword id="KW-0547">Nucleotide-binding</keyword>
<keyword id="KW-0808">Transferase</keyword>
<dbReference type="EC" id="2.7.1.6" evidence="1"/>
<dbReference type="EMBL" id="AP007281">
    <property type="protein sequence ID" value="BAG26178.1"/>
    <property type="molecule type" value="Genomic_DNA"/>
</dbReference>
<dbReference type="RefSeq" id="WP_011953582.1">
    <property type="nucleotide sequence ID" value="NC_010609.1"/>
</dbReference>
<dbReference type="SMR" id="B2G9P6"/>
<dbReference type="KEGG" id="lrf:LAR_1662"/>
<dbReference type="HOGENOM" id="CLU_017814_2_1_9"/>
<dbReference type="UniPathway" id="UPA00214"/>
<dbReference type="GO" id="GO:0005829">
    <property type="term" value="C:cytosol"/>
    <property type="evidence" value="ECO:0007669"/>
    <property type="project" value="TreeGrafter"/>
</dbReference>
<dbReference type="GO" id="GO:0005524">
    <property type="term" value="F:ATP binding"/>
    <property type="evidence" value="ECO:0007669"/>
    <property type="project" value="UniProtKB-UniRule"/>
</dbReference>
<dbReference type="GO" id="GO:0004335">
    <property type="term" value="F:galactokinase activity"/>
    <property type="evidence" value="ECO:0007669"/>
    <property type="project" value="UniProtKB-UniRule"/>
</dbReference>
<dbReference type="GO" id="GO:0000287">
    <property type="term" value="F:magnesium ion binding"/>
    <property type="evidence" value="ECO:0007669"/>
    <property type="project" value="UniProtKB-UniRule"/>
</dbReference>
<dbReference type="GO" id="GO:0006012">
    <property type="term" value="P:galactose metabolic process"/>
    <property type="evidence" value="ECO:0007669"/>
    <property type="project" value="UniProtKB-UniRule"/>
</dbReference>
<dbReference type="FunFam" id="3.30.230.10:FF:000017">
    <property type="entry name" value="Galactokinase"/>
    <property type="match status" value="1"/>
</dbReference>
<dbReference type="FunFam" id="3.30.70.890:FF:000001">
    <property type="entry name" value="Galactokinase"/>
    <property type="match status" value="1"/>
</dbReference>
<dbReference type="Gene3D" id="3.30.230.10">
    <property type="match status" value="1"/>
</dbReference>
<dbReference type="Gene3D" id="3.30.70.890">
    <property type="entry name" value="GHMP kinase, C-terminal domain"/>
    <property type="match status" value="1"/>
</dbReference>
<dbReference type="HAMAP" id="MF_00246">
    <property type="entry name" value="Galactokinase"/>
    <property type="match status" value="1"/>
</dbReference>
<dbReference type="InterPro" id="IPR000705">
    <property type="entry name" value="Galactokinase"/>
</dbReference>
<dbReference type="InterPro" id="IPR022963">
    <property type="entry name" value="Galactokinase_bac"/>
</dbReference>
<dbReference type="InterPro" id="IPR019741">
    <property type="entry name" value="Galactokinase_CS"/>
</dbReference>
<dbReference type="InterPro" id="IPR019539">
    <property type="entry name" value="GalKase_N"/>
</dbReference>
<dbReference type="InterPro" id="IPR013750">
    <property type="entry name" value="GHMP_kinase_C_dom"/>
</dbReference>
<dbReference type="InterPro" id="IPR036554">
    <property type="entry name" value="GHMP_kinase_C_sf"/>
</dbReference>
<dbReference type="InterPro" id="IPR006204">
    <property type="entry name" value="GHMP_kinase_N_dom"/>
</dbReference>
<dbReference type="InterPro" id="IPR006203">
    <property type="entry name" value="GHMP_knse_ATP-bd_CS"/>
</dbReference>
<dbReference type="InterPro" id="IPR006206">
    <property type="entry name" value="Mevalonate/galactokinase"/>
</dbReference>
<dbReference type="InterPro" id="IPR020568">
    <property type="entry name" value="Ribosomal_Su5_D2-typ_SF"/>
</dbReference>
<dbReference type="InterPro" id="IPR014721">
    <property type="entry name" value="Ribsml_uS5_D2-typ_fold_subgr"/>
</dbReference>
<dbReference type="NCBIfam" id="TIGR00131">
    <property type="entry name" value="gal_kin"/>
    <property type="match status" value="1"/>
</dbReference>
<dbReference type="NCBIfam" id="NF003705">
    <property type="entry name" value="PRK05322.1"/>
    <property type="match status" value="1"/>
</dbReference>
<dbReference type="PANTHER" id="PTHR10457:SF7">
    <property type="entry name" value="GALACTOKINASE-RELATED"/>
    <property type="match status" value="1"/>
</dbReference>
<dbReference type="PANTHER" id="PTHR10457">
    <property type="entry name" value="MEVALONATE KINASE/GALACTOKINASE"/>
    <property type="match status" value="1"/>
</dbReference>
<dbReference type="Pfam" id="PF10509">
    <property type="entry name" value="GalKase_gal_bdg"/>
    <property type="match status" value="1"/>
</dbReference>
<dbReference type="Pfam" id="PF08544">
    <property type="entry name" value="GHMP_kinases_C"/>
    <property type="match status" value="1"/>
</dbReference>
<dbReference type="Pfam" id="PF00288">
    <property type="entry name" value="GHMP_kinases_N"/>
    <property type="match status" value="1"/>
</dbReference>
<dbReference type="PIRSF" id="PIRSF000530">
    <property type="entry name" value="Galactokinase"/>
    <property type="match status" value="1"/>
</dbReference>
<dbReference type="PRINTS" id="PR00473">
    <property type="entry name" value="GALCTOKINASE"/>
</dbReference>
<dbReference type="PRINTS" id="PR00959">
    <property type="entry name" value="MEVGALKINASE"/>
</dbReference>
<dbReference type="SUPFAM" id="SSF55060">
    <property type="entry name" value="GHMP Kinase, C-terminal domain"/>
    <property type="match status" value="1"/>
</dbReference>
<dbReference type="SUPFAM" id="SSF54211">
    <property type="entry name" value="Ribosomal protein S5 domain 2-like"/>
    <property type="match status" value="1"/>
</dbReference>
<dbReference type="PROSITE" id="PS00106">
    <property type="entry name" value="GALACTOKINASE"/>
    <property type="match status" value="1"/>
</dbReference>
<dbReference type="PROSITE" id="PS00627">
    <property type="entry name" value="GHMP_KINASES_ATP"/>
    <property type="match status" value="1"/>
</dbReference>
<feature type="chain" id="PRO_1000100833" description="Galactokinase">
    <location>
        <begin position="1"/>
        <end position="392"/>
    </location>
</feature>
<feature type="active site" description="Proton acceptor" evidence="1">
    <location>
        <position position="179"/>
    </location>
</feature>
<feature type="binding site" evidence="1">
    <location>
        <begin position="33"/>
        <end position="36"/>
    </location>
    <ligand>
        <name>substrate</name>
    </ligand>
</feature>
<feature type="binding site" evidence="1">
    <location>
        <position position="67"/>
    </location>
    <ligand>
        <name>ATP</name>
        <dbReference type="ChEBI" id="CHEBI:30616"/>
    </ligand>
</feature>
<feature type="binding site" evidence="1">
    <location>
        <begin position="129"/>
        <end position="135"/>
    </location>
    <ligand>
        <name>ATP</name>
        <dbReference type="ChEBI" id="CHEBI:30616"/>
    </ligand>
</feature>
<feature type="binding site" evidence="1">
    <location>
        <position position="135"/>
    </location>
    <ligand>
        <name>Mg(2+)</name>
        <dbReference type="ChEBI" id="CHEBI:18420"/>
    </ligand>
</feature>
<feature type="binding site" evidence="1">
    <location>
        <position position="167"/>
    </location>
    <ligand>
        <name>Mg(2+)</name>
        <dbReference type="ChEBI" id="CHEBI:18420"/>
    </ligand>
</feature>
<feature type="binding site" evidence="1">
    <location>
        <position position="229"/>
    </location>
    <ligand>
        <name>substrate</name>
    </ligand>
</feature>
<feature type="site" description="Transition state stabilizer" evidence="1">
    <location>
        <position position="27"/>
    </location>
</feature>
<sequence>MDKQQFLAEYQDVFKEPGKDVFFSPGRINVIGEHTDYNGGHVFPCAISIGTYGVYGPREDTTVAIYSANSAKEEDSKIITFDINDTEPQNAKDEKWVNYFKGMLVYLKQRGFKIDHGFNLYIHGFLPYGSGLSSSASIEMLMGNILKDEFNLDIDEIELVKLGQKTENDFVGLNSGIMDQFAVGMGKENNAIYLDCNTLEYKYLPLELGDYEIIIMSTNKNHSLAGSKYNERVQECEEAVKRLNKKLDINKLGELDSDTFDQYTYLIDDDTLIRRARHAVSENERTKKAIDAMEKGDLEELGRLINASHVSLKYDYEVTGKELDTLAENAWNQPGCLGARMVGGGFAGSAIAIVKKSEAENFKKNVGKIYRDKIGYDASFYDAEVVDGPHKL</sequence>
<evidence type="ECO:0000255" key="1">
    <source>
        <dbReference type="HAMAP-Rule" id="MF_00246"/>
    </source>
</evidence>
<proteinExistence type="inferred from homology"/>
<gene>
    <name evidence="1" type="primary">galK</name>
    <name type="ordered locus">LAR_1662</name>
</gene>
<reference key="1">
    <citation type="journal article" date="2008" name="DNA Res.">
        <title>Comparative genome analysis of Lactobacillus reuteri and Lactobacillus fermentum reveal a genomic island for reuterin and cobalamin production.</title>
        <authorList>
            <person name="Morita H."/>
            <person name="Toh H."/>
            <person name="Fukuda S."/>
            <person name="Horikawa H."/>
            <person name="Oshima K."/>
            <person name="Suzuki T."/>
            <person name="Murakami M."/>
            <person name="Hisamatsu S."/>
            <person name="Kato Y."/>
            <person name="Takizawa T."/>
            <person name="Fukuoka H."/>
            <person name="Yoshimura T."/>
            <person name="Itoh K."/>
            <person name="O'Sullivan D.J."/>
            <person name="McKay L.L."/>
            <person name="Ohno H."/>
            <person name="Kikuchi J."/>
            <person name="Masaoka T."/>
            <person name="Hattori M."/>
        </authorList>
    </citation>
    <scope>NUCLEOTIDE SEQUENCE [LARGE SCALE GENOMIC DNA]</scope>
    <source>
        <strain>JCM 1112</strain>
    </source>
</reference>
<comment type="function">
    <text evidence="1">Catalyzes the transfer of the gamma-phosphate of ATP to D-galactose to form alpha-D-galactose-1-phosphate (Gal-1-P).</text>
</comment>
<comment type="catalytic activity">
    <reaction evidence="1">
        <text>alpha-D-galactose + ATP = alpha-D-galactose 1-phosphate + ADP + H(+)</text>
        <dbReference type="Rhea" id="RHEA:13553"/>
        <dbReference type="ChEBI" id="CHEBI:15378"/>
        <dbReference type="ChEBI" id="CHEBI:28061"/>
        <dbReference type="ChEBI" id="CHEBI:30616"/>
        <dbReference type="ChEBI" id="CHEBI:58336"/>
        <dbReference type="ChEBI" id="CHEBI:456216"/>
        <dbReference type="EC" id="2.7.1.6"/>
    </reaction>
</comment>
<comment type="pathway">
    <text evidence="1">Carbohydrate metabolism; galactose metabolism.</text>
</comment>
<comment type="subcellular location">
    <subcellularLocation>
        <location evidence="1">Cytoplasm</location>
    </subcellularLocation>
</comment>
<comment type="similarity">
    <text evidence="1">Belongs to the GHMP kinase family. GalK subfamily.</text>
</comment>
<name>GAL1_LIMRJ</name>
<accession>B2G9P6</accession>
<organism>
    <name type="scientific">Limosilactobacillus reuteri subsp. reuteri (strain JCM 1112)</name>
    <name type="common">Lactobacillus reuteri</name>
    <dbReference type="NCBI Taxonomy" id="557433"/>
    <lineage>
        <taxon>Bacteria</taxon>
        <taxon>Bacillati</taxon>
        <taxon>Bacillota</taxon>
        <taxon>Bacilli</taxon>
        <taxon>Lactobacillales</taxon>
        <taxon>Lactobacillaceae</taxon>
        <taxon>Limosilactobacillus</taxon>
    </lineage>
</organism>
<protein>
    <recommendedName>
        <fullName evidence="1">Galactokinase</fullName>
        <ecNumber evidence="1">2.7.1.6</ecNumber>
    </recommendedName>
    <alternativeName>
        <fullName evidence="1">Galactose kinase</fullName>
    </alternativeName>
</protein>